<sequence>MEEFQRYLEPDRFRQHDFLYPLLFREYIYALAHDHGFNSYMLLENIGYDNKSSLLIVKRLITRMYQHNYLMISANDSNQNQFFGYNKNLHSQIISEGFAVIVEIPFSLRLISSFEGAEIVISYKLRSIHSIFPFLEDKLPHLNYTTDVRIPYPIHLEILIQTLRSRVKDASYLHLLRFFLHQYSNWNILIITTKSISIFSKSNPRFFLFLYNSHICQYESIFLFLGNQSSHLRIISSGVLFERLYLHKKIEHFAEVFANDFPVIPCFLKDPFMHYVRYQGKSILASKDTPLLMNKWKYYLVNLWQCHFYVWSHPGRIHINQLSKHSLDFWGYFSSVQLNPSVVRSQMLENSFLINNAPKKLDIIVPIIPLIGSLAKARFCNALGHPISKLTRADLSDFEILNRFLRICRNLSHYYSGSSKKKSMYRIKYILRLSCVKTLARKHKSTARAFLKKVGSEFVQEFFTEEEEFLSLIFPRTSFTLRRLYRGRVWYLDIIFINGLANHE</sequence>
<feature type="chain" id="PRO_0000143386" description="Maturase K">
    <location>
        <begin position="1"/>
        <end position="504"/>
    </location>
</feature>
<geneLocation type="chloroplast"/>
<name>MATK_FAGHA</name>
<evidence type="ECO:0000255" key="1">
    <source>
        <dbReference type="HAMAP-Rule" id="MF_01390"/>
    </source>
</evidence>
<accession>Q8WKE6</accession>
<organism>
    <name type="scientific">Fagus hayatae</name>
    <name type="common">Formosan elm</name>
    <dbReference type="NCBI Taxonomy" id="133895"/>
    <lineage>
        <taxon>Eukaryota</taxon>
        <taxon>Viridiplantae</taxon>
        <taxon>Streptophyta</taxon>
        <taxon>Embryophyta</taxon>
        <taxon>Tracheophyta</taxon>
        <taxon>Spermatophyta</taxon>
        <taxon>Magnoliopsida</taxon>
        <taxon>eudicotyledons</taxon>
        <taxon>Gunneridae</taxon>
        <taxon>Pentapetalae</taxon>
        <taxon>rosids</taxon>
        <taxon>fabids</taxon>
        <taxon>Fagales</taxon>
        <taxon>Fagaceae</taxon>
        <taxon>Fagus</taxon>
    </lineage>
</organism>
<comment type="function">
    <text evidence="1">Usually encoded in the trnK tRNA gene intron. Probably assists in splicing its own and other chloroplast group II introns.</text>
</comment>
<comment type="subcellular location">
    <subcellularLocation>
        <location>Plastid</location>
        <location>Chloroplast</location>
    </subcellularLocation>
</comment>
<comment type="similarity">
    <text evidence="1">Belongs to the intron maturase 2 family. MatK subfamily.</text>
</comment>
<protein>
    <recommendedName>
        <fullName evidence="1">Maturase K</fullName>
    </recommendedName>
    <alternativeName>
        <fullName evidence="1">Intron maturase</fullName>
    </alternativeName>
</protein>
<gene>
    <name evidence="1" type="primary">matK</name>
</gene>
<keyword id="KW-0150">Chloroplast</keyword>
<keyword id="KW-0507">mRNA processing</keyword>
<keyword id="KW-0934">Plastid</keyword>
<keyword id="KW-0694">RNA-binding</keyword>
<keyword id="KW-0819">tRNA processing</keyword>
<dbReference type="EMBL" id="AB046506">
    <property type="protein sequence ID" value="BAB84005.1"/>
    <property type="molecule type" value="Genomic_DNA"/>
</dbReference>
<dbReference type="GO" id="GO:0009507">
    <property type="term" value="C:chloroplast"/>
    <property type="evidence" value="ECO:0007669"/>
    <property type="project" value="UniProtKB-SubCell"/>
</dbReference>
<dbReference type="GO" id="GO:0003723">
    <property type="term" value="F:RNA binding"/>
    <property type="evidence" value="ECO:0007669"/>
    <property type="project" value="UniProtKB-KW"/>
</dbReference>
<dbReference type="GO" id="GO:0006397">
    <property type="term" value="P:mRNA processing"/>
    <property type="evidence" value="ECO:0007669"/>
    <property type="project" value="UniProtKB-KW"/>
</dbReference>
<dbReference type="GO" id="GO:0008380">
    <property type="term" value="P:RNA splicing"/>
    <property type="evidence" value="ECO:0007669"/>
    <property type="project" value="UniProtKB-UniRule"/>
</dbReference>
<dbReference type="GO" id="GO:0008033">
    <property type="term" value="P:tRNA processing"/>
    <property type="evidence" value="ECO:0007669"/>
    <property type="project" value="UniProtKB-KW"/>
</dbReference>
<dbReference type="HAMAP" id="MF_01390">
    <property type="entry name" value="MatK"/>
    <property type="match status" value="1"/>
</dbReference>
<dbReference type="InterPro" id="IPR024937">
    <property type="entry name" value="Domain_X"/>
</dbReference>
<dbReference type="InterPro" id="IPR002866">
    <property type="entry name" value="Maturase_MatK"/>
</dbReference>
<dbReference type="InterPro" id="IPR024942">
    <property type="entry name" value="Maturase_MatK_N"/>
</dbReference>
<dbReference type="PANTHER" id="PTHR34811">
    <property type="entry name" value="MATURASE K"/>
    <property type="match status" value="1"/>
</dbReference>
<dbReference type="PANTHER" id="PTHR34811:SF1">
    <property type="entry name" value="MATURASE K"/>
    <property type="match status" value="1"/>
</dbReference>
<dbReference type="Pfam" id="PF01348">
    <property type="entry name" value="Intron_maturas2"/>
    <property type="match status" value="1"/>
</dbReference>
<dbReference type="Pfam" id="PF01824">
    <property type="entry name" value="MatK_N"/>
    <property type="match status" value="1"/>
</dbReference>
<proteinExistence type="inferred from homology"/>
<reference key="1">
    <citation type="submission" date="2000-07" db="EMBL/GenBank/DDBJ databases">
        <title>Chloroplast DNA phylogeography of the common beech (Fagus crenata Blume) in Japan.</title>
        <authorList>
            <person name="Fujii N."/>
            <person name="Tomaru N."/>
            <person name="Okuyama K."/>
            <person name="Koike T."/>
            <person name="Mikami T."/>
            <person name="Ueda K."/>
        </authorList>
    </citation>
    <scope>NUCLEOTIDE SEQUENCE [GENOMIC DNA]</scope>
</reference>